<protein>
    <recommendedName>
        <fullName evidence="1">Chaperone protein DnaK</fullName>
    </recommendedName>
    <alternativeName>
        <fullName evidence="1">HSP70</fullName>
    </alternativeName>
    <alternativeName>
        <fullName evidence="1">Heat shock 70 kDa protein</fullName>
    </alternativeName>
    <alternativeName>
        <fullName evidence="1">Heat shock protein 70</fullName>
    </alternativeName>
</protein>
<organism>
    <name type="scientific">Lactobacillus delbrueckii subsp. bulgaricus (strain ATCC BAA-365 / Lb-18)</name>
    <dbReference type="NCBI Taxonomy" id="321956"/>
    <lineage>
        <taxon>Bacteria</taxon>
        <taxon>Bacillati</taxon>
        <taxon>Bacillota</taxon>
        <taxon>Bacilli</taxon>
        <taxon>Lactobacillales</taxon>
        <taxon>Lactobacillaceae</taxon>
        <taxon>Lactobacillus</taxon>
    </lineage>
</organism>
<name>DNAK_LACDB</name>
<proteinExistence type="inferred from homology"/>
<sequence length="614" mass="66114">MSKVIGIDLGTTNSAVAVLEGKEPKIITNPEGARTTPSVVAFKDGEIQVGEVAKRQAITNPNTIVSIKRHMGESDYKVKVGDKAYTPQEISAMILQYIKKFSEDYLGEPVTDAVITVPAYFNDAQRQATKDAGKIAGLNVQRIINEPTASALAYGLDKDEDDETVLVYDLGGGTFDVSVLQLGDGVFQVLSTNGDTHLGGDDFDNKIIDWLVDGFKQENGIDLSKDKMAMQRLKDAAEKAKKDLSGVSSTHISLPFISAGEAGPLHLEVDLTRAKFNELTDDLVQRTKIPFDNALRDAGLSVGDIDKVILNGGSTRIPAVQEAVKQWAGKEPDHSINPDEAVALGAAIQGGVISGDVKDIVLLDVTPLSLGIETKGGVFTKLIDRNTTIPTSKSQIFSTAVDNQPAVDIHVLQGERPMAADNKTLGRFELTDIPAAPRGVPQIQVTFDIDKNGIVNVSAKDLGTGKEQKITIQSASGLSDEEIERMKKEAEEHAEEDAKKKEEVDLRNEVDGLIFQTEKTLKEVDGKLADSDIQPVKDALEDLKKAQKDNNLDEMKEKKDALSKVAQDLAVKLYQQNSQNQQGQGGQAGPTDDGSNGANGDTVDGDFTKVDPDK</sequence>
<evidence type="ECO:0000255" key="1">
    <source>
        <dbReference type="HAMAP-Rule" id="MF_00332"/>
    </source>
</evidence>
<evidence type="ECO:0000256" key="2">
    <source>
        <dbReference type="SAM" id="MobiDB-lite"/>
    </source>
</evidence>
<keyword id="KW-0067">ATP-binding</keyword>
<keyword id="KW-0143">Chaperone</keyword>
<keyword id="KW-0547">Nucleotide-binding</keyword>
<keyword id="KW-0597">Phosphoprotein</keyword>
<keyword id="KW-0346">Stress response</keyword>
<comment type="function">
    <text evidence="1">Acts as a chaperone.</text>
</comment>
<comment type="induction">
    <text evidence="1">By stress conditions e.g. heat shock.</text>
</comment>
<comment type="similarity">
    <text evidence="1">Belongs to the heat shock protein 70 family.</text>
</comment>
<reference key="1">
    <citation type="journal article" date="2006" name="Proc. Natl. Acad. Sci. U.S.A.">
        <title>Comparative genomics of the lactic acid bacteria.</title>
        <authorList>
            <person name="Makarova K.S."/>
            <person name="Slesarev A."/>
            <person name="Wolf Y.I."/>
            <person name="Sorokin A."/>
            <person name="Mirkin B."/>
            <person name="Koonin E.V."/>
            <person name="Pavlov A."/>
            <person name="Pavlova N."/>
            <person name="Karamychev V."/>
            <person name="Polouchine N."/>
            <person name="Shakhova V."/>
            <person name="Grigoriev I."/>
            <person name="Lou Y."/>
            <person name="Rohksar D."/>
            <person name="Lucas S."/>
            <person name="Huang K."/>
            <person name="Goodstein D.M."/>
            <person name="Hawkins T."/>
            <person name="Plengvidhya V."/>
            <person name="Welker D."/>
            <person name="Hughes J."/>
            <person name="Goh Y."/>
            <person name="Benson A."/>
            <person name="Baldwin K."/>
            <person name="Lee J.-H."/>
            <person name="Diaz-Muniz I."/>
            <person name="Dosti B."/>
            <person name="Smeianov V."/>
            <person name="Wechter W."/>
            <person name="Barabote R."/>
            <person name="Lorca G."/>
            <person name="Altermann E."/>
            <person name="Barrangou R."/>
            <person name="Ganesan B."/>
            <person name="Xie Y."/>
            <person name="Rawsthorne H."/>
            <person name="Tamir D."/>
            <person name="Parker C."/>
            <person name="Breidt F."/>
            <person name="Broadbent J.R."/>
            <person name="Hutkins R."/>
            <person name="O'Sullivan D."/>
            <person name="Steele J."/>
            <person name="Unlu G."/>
            <person name="Saier M.H. Jr."/>
            <person name="Klaenhammer T."/>
            <person name="Richardson P."/>
            <person name="Kozyavkin S."/>
            <person name="Weimer B.C."/>
            <person name="Mills D.A."/>
        </authorList>
    </citation>
    <scope>NUCLEOTIDE SEQUENCE [LARGE SCALE GENOMIC DNA]</scope>
    <source>
        <strain>ATCC BAA-365 / Lb-18</strain>
    </source>
</reference>
<gene>
    <name evidence="1" type="primary">dnaK</name>
    <name type="ordered locus">LBUL_1227</name>
</gene>
<accession>Q049W6</accession>
<dbReference type="EMBL" id="CP000412">
    <property type="protein sequence ID" value="ABJ58756.1"/>
    <property type="molecule type" value="Genomic_DNA"/>
</dbReference>
<dbReference type="RefSeq" id="WP_003618620.1">
    <property type="nucleotide sequence ID" value="NC_008529.1"/>
</dbReference>
<dbReference type="SMR" id="Q049W6"/>
<dbReference type="KEGG" id="lbu:LBUL_1227"/>
<dbReference type="HOGENOM" id="CLU_005965_2_4_9"/>
<dbReference type="BioCyc" id="LDEL321956:LBUL_RS05740-MONOMER"/>
<dbReference type="GO" id="GO:0005524">
    <property type="term" value="F:ATP binding"/>
    <property type="evidence" value="ECO:0007669"/>
    <property type="project" value="UniProtKB-UniRule"/>
</dbReference>
<dbReference type="GO" id="GO:0140662">
    <property type="term" value="F:ATP-dependent protein folding chaperone"/>
    <property type="evidence" value="ECO:0007669"/>
    <property type="project" value="InterPro"/>
</dbReference>
<dbReference type="GO" id="GO:0051082">
    <property type="term" value="F:unfolded protein binding"/>
    <property type="evidence" value="ECO:0007669"/>
    <property type="project" value="InterPro"/>
</dbReference>
<dbReference type="CDD" id="cd10234">
    <property type="entry name" value="ASKHA_NBD_HSP70_DnaK-like"/>
    <property type="match status" value="1"/>
</dbReference>
<dbReference type="FunFam" id="2.60.34.10:FF:000014">
    <property type="entry name" value="Chaperone protein DnaK HSP70"/>
    <property type="match status" value="1"/>
</dbReference>
<dbReference type="FunFam" id="1.20.1270.10:FF:000001">
    <property type="entry name" value="Molecular chaperone DnaK"/>
    <property type="match status" value="1"/>
</dbReference>
<dbReference type="FunFam" id="3.30.420.40:FF:000071">
    <property type="entry name" value="Molecular chaperone DnaK"/>
    <property type="match status" value="1"/>
</dbReference>
<dbReference type="FunFam" id="3.90.640.10:FF:000003">
    <property type="entry name" value="Molecular chaperone DnaK"/>
    <property type="match status" value="1"/>
</dbReference>
<dbReference type="Gene3D" id="1.20.1270.10">
    <property type="match status" value="1"/>
</dbReference>
<dbReference type="Gene3D" id="3.30.420.40">
    <property type="match status" value="2"/>
</dbReference>
<dbReference type="Gene3D" id="3.90.640.10">
    <property type="entry name" value="Actin, Chain A, domain 4"/>
    <property type="match status" value="1"/>
</dbReference>
<dbReference type="Gene3D" id="2.60.34.10">
    <property type="entry name" value="Substrate Binding Domain Of DNAk, Chain A, domain 1"/>
    <property type="match status" value="1"/>
</dbReference>
<dbReference type="HAMAP" id="MF_00332">
    <property type="entry name" value="DnaK"/>
    <property type="match status" value="1"/>
</dbReference>
<dbReference type="InterPro" id="IPR043129">
    <property type="entry name" value="ATPase_NBD"/>
</dbReference>
<dbReference type="InterPro" id="IPR012725">
    <property type="entry name" value="Chaperone_DnaK"/>
</dbReference>
<dbReference type="InterPro" id="IPR018181">
    <property type="entry name" value="Heat_shock_70_CS"/>
</dbReference>
<dbReference type="InterPro" id="IPR029048">
    <property type="entry name" value="HSP70_C_sf"/>
</dbReference>
<dbReference type="InterPro" id="IPR029047">
    <property type="entry name" value="HSP70_peptide-bd_sf"/>
</dbReference>
<dbReference type="InterPro" id="IPR013126">
    <property type="entry name" value="Hsp_70_fam"/>
</dbReference>
<dbReference type="NCBIfam" id="NF001413">
    <property type="entry name" value="PRK00290.1"/>
    <property type="match status" value="1"/>
</dbReference>
<dbReference type="NCBIfam" id="TIGR02350">
    <property type="entry name" value="prok_dnaK"/>
    <property type="match status" value="1"/>
</dbReference>
<dbReference type="PANTHER" id="PTHR19375">
    <property type="entry name" value="HEAT SHOCK PROTEIN 70KDA"/>
    <property type="match status" value="1"/>
</dbReference>
<dbReference type="Pfam" id="PF00012">
    <property type="entry name" value="HSP70"/>
    <property type="match status" value="1"/>
</dbReference>
<dbReference type="PRINTS" id="PR00301">
    <property type="entry name" value="HEATSHOCK70"/>
</dbReference>
<dbReference type="SUPFAM" id="SSF53067">
    <property type="entry name" value="Actin-like ATPase domain"/>
    <property type="match status" value="2"/>
</dbReference>
<dbReference type="SUPFAM" id="SSF100934">
    <property type="entry name" value="Heat shock protein 70kD (HSP70), C-terminal subdomain"/>
    <property type="match status" value="1"/>
</dbReference>
<dbReference type="SUPFAM" id="SSF100920">
    <property type="entry name" value="Heat shock protein 70kD (HSP70), peptide-binding domain"/>
    <property type="match status" value="1"/>
</dbReference>
<dbReference type="PROSITE" id="PS00297">
    <property type="entry name" value="HSP70_1"/>
    <property type="match status" value="1"/>
</dbReference>
<dbReference type="PROSITE" id="PS00329">
    <property type="entry name" value="HSP70_2"/>
    <property type="match status" value="1"/>
</dbReference>
<dbReference type="PROSITE" id="PS01036">
    <property type="entry name" value="HSP70_3"/>
    <property type="match status" value="1"/>
</dbReference>
<feature type="chain" id="PRO_1000059587" description="Chaperone protein DnaK">
    <location>
        <begin position="1"/>
        <end position="614"/>
    </location>
</feature>
<feature type="region of interest" description="Disordered" evidence="2">
    <location>
        <begin position="573"/>
        <end position="614"/>
    </location>
</feature>
<feature type="modified residue" description="Phosphothreonine; by autocatalysis" evidence="1">
    <location>
        <position position="174"/>
    </location>
</feature>